<sequence length="599" mass="69398">MLYPLLTKTRNTYDLGGIWNFKLGEHNPNELLPSDEVMVIPTSFNDLMVSKEKRDYIGDFWYEKVIEVPKVSEDEEMVLRFGSVTHQAKIYVDGVLVGEHKGGFTPFEVLVPECKYNNEKIKVSICANNVLDYTTLPVGNYSEIIQEDGSIKKKVRENFDFFNYAGVHRPLKLMIRPKNHIFDITITSRLSDDLQSADLHFLVETNQKVDEVRISVFDEDNKLVGETKDSRLFLSDVHLWEVLNAYLYTARVEIFVDNQLQDVYEENFGLREIEVTNGQFLLNRKPIYFKGFGKHEDTFINGRGLNEAANLMDLNLLKDMGANSFRTSHYPYSEEMMRLADRMGVLVIDEVPAVGLFQNFNASLDLSPKDNGTWNLMQTKAAHEQAIQELVKRDKNHPSVVMWVVANEPASHEAGAHDYFEPLVKLYKDLDPQKRPVTLVNILMATPDRDQVMDLVDVVCLNRYYGWYVDHGDLTNAEVGIRKELLEWQDKFPDKPIIITEYGADTLPGLHSTWNIPYTEEFQCDFYEMSHRVFDGIPNLVGEQVWNFADFETNLMILRVQGNHKGLFSRNRQPKQVVKEFKKRWMTIPHYHNKKNSVK</sequence>
<name>BGLR_STRA5</name>
<comment type="function">
    <text evidence="2">Displays beta-glucuronidase activity with the artificial substrate p-nitrophenyl-beta-D-glucuronide (PNPG). Is likely capable of scavenging glucuronate from a range of chemically distinct xenobiotic and endobiotic glucuronides present in the gastrointestinal (GI) tract, to be able to utilize these diverse sources of carbon. As part of the GI microbiome, this enzyme would be able to reactivate glucuronide drug conjugates, such reactivated compounds can significantly damage the GI tract.</text>
</comment>
<comment type="catalytic activity">
    <reaction evidence="2">
        <text>a beta-D-glucuronoside + H2O = D-glucuronate + an alcohol</text>
        <dbReference type="Rhea" id="RHEA:17633"/>
        <dbReference type="ChEBI" id="CHEBI:15377"/>
        <dbReference type="ChEBI" id="CHEBI:30879"/>
        <dbReference type="ChEBI" id="CHEBI:58720"/>
        <dbReference type="ChEBI" id="CHEBI:83411"/>
        <dbReference type="EC" id="3.2.1.31"/>
    </reaction>
    <physiologicalReaction direction="left-to-right" evidence="5">
        <dbReference type="Rhea" id="RHEA:17634"/>
    </physiologicalReaction>
</comment>
<comment type="activity regulation">
    <text evidence="2">Inhibited by a set of synthetic compounds like thio-urea derivatives and analogs. Inhibitors of gut microbial beta-glucuronidases are expected to block the reactivation of glucuronidated cancer drugs, and to alleviate drug-induced GI toxicity.</text>
</comment>
<comment type="biophysicochemical properties">
    <kinetics>
        <KM evidence="2">0.36 mM for p-nitrophenyl-beta-D-glucuronide</KM>
        <text evidence="2">kcat is 80 sec(-1) with p-nitrophenyl-beta-D-glucuronide as substrate.</text>
    </kinetics>
</comment>
<comment type="domain">
    <text evidence="5">The N-K motif seems to be a discriminant that could be employed as a fingerprint to identify beta-glucuronidases from the large GH2 family of proteins.</text>
</comment>
<comment type="similarity">
    <text evidence="4">Belongs to the glycosyl hydrolase 2 family.</text>
</comment>
<accession>Q8E0N2</accession>
<keyword id="KW-0002">3D-structure</keyword>
<keyword id="KW-0326">Glycosidase</keyword>
<keyword id="KW-0378">Hydrolase</keyword>
<keyword id="KW-1185">Reference proteome</keyword>
<evidence type="ECO:0000250" key="1">
    <source>
        <dbReference type="UniProtKB" id="P05804"/>
    </source>
</evidence>
<evidence type="ECO:0000269" key="2">
    <source>
    </source>
</evidence>
<evidence type="ECO:0000303" key="3">
    <source>
    </source>
</evidence>
<evidence type="ECO:0000305" key="4"/>
<evidence type="ECO:0000305" key="5">
    <source>
    </source>
</evidence>
<evidence type="ECO:0000312" key="6">
    <source>
        <dbReference type="EMBL" id="AAM99585.1"/>
    </source>
</evidence>
<evidence type="ECO:0007744" key="7">
    <source>
        <dbReference type="PDB" id="4JKK"/>
    </source>
</evidence>
<evidence type="ECO:0007744" key="8">
    <source>
        <dbReference type="PDB" id="4JKL"/>
    </source>
</evidence>
<evidence type="ECO:0007829" key="9">
    <source>
        <dbReference type="PDB" id="4JKL"/>
    </source>
</evidence>
<proteinExistence type="evidence at protein level"/>
<gene>
    <name evidence="6" type="ordered locus">SAG0698</name>
</gene>
<reference key="1">
    <citation type="journal article" date="2002" name="Proc. Natl. Acad. Sci. U.S.A.">
        <title>Complete genome sequence and comparative genomic analysis of an emerging human pathogen, serotype V Streptococcus agalactiae.</title>
        <authorList>
            <person name="Tettelin H."/>
            <person name="Masignani V."/>
            <person name="Cieslewicz M.J."/>
            <person name="Eisen J.A."/>
            <person name="Peterson S.N."/>
            <person name="Wessels M.R."/>
            <person name="Paulsen I.T."/>
            <person name="Nelson K.E."/>
            <person name="Margarit I."/>
            <person name="Read T.D."/>
            <person name="Madoff L.C."/>
            <person name="Wolf A.M."/>
            <person name="Beanan M.J."/>
            <person name="Brinkac L.M."/>
            <person name="Daugherty S.C."/>
            <person name="DeBoy R.T."/>
            <person name="Durkin A.S."/>
            <person name="Kolonay J.F."/>
            <person name="Madupu R."/>
            <person name="Lewis M.R."/>
            <person name="Radune D."/>
            <person name="Fedorova N.B."/>
            <person name="Scanlan D."/>
            <person name="Khouri H.M."/>
            <person name="Mulligan S."/>
            <person name="Carty H.A."/>
            <person name="Cline R.T."/>
            <person name="Van Aken S.E."/>
            <person name="Gill J."/>
            <person name="Scarselli M."/>
            <person name="Mora M."/>
            <person name="Iacobini E.T."/>
            <person name="Brettoni C."/>
            <person name="Galli G."/>
            <person name="Mariani M."/>
            <person name="Vegni F."/>
            <person name="Maione D."/>
            <person name="Rinaudo D."/>
            <person name="Rappuoli R."/>
            <person name="Telford J.L."/>
            <person name="Kasper D.L."/>
            <person name="Grandi G."/>
            <person name="Fraser C.M."/>
        </authorList>
    </citation>
    <scope>NUCLEOTIDE SEQUENCE [LARGE SCALE GENOMIC DNA]</scope>
    <source>
        <strain>ATCC BAA-611 / 2603 V/R</strain>
    </source>
</reference>
<reference evidence="7 8" key="2">
    <citation type="journal article" date="2015" name="Chem. Biol.">
        <title>Structure and Inhibition of Microbiome beta-Glucuronidases Essential to the Alleviation of Cancer Drug Toxicity.</title>
        <authorList>
            <person name="Wallace B.D."/>
            <person name="Roberts A.B."/>
            <person name="Pollet R.M."/>
            <person name="Ingle J.D."/>
            <person name="Biernat K.A."/>
            <person name="Pellock S.J."/>
            <person name="Venkatesh M.K."/>
            <person name="Guthrie L."/>
            <person name="O'Neal S.K."/>
            <person name="Robinson S.J."/>
            <person name="Dollinger M."/>
            <person name="Figueroa E."/>
            <person name="McShane S.R."/>
            <person name="Cohen R.D."/>
            <person name="Jin J."/>
            <person name="Frye S.V."/>
            <person name="Zamboni W.C."/>
            <person name="Pepe-Ranney C."/>
            <person name="Mani S."/>
            <person name="Kelly L."/>
            <person name="Redinbo M.R."/>
        </authorList>
    </citation>
    <scope>X-RAY CRYSTALLOGRAPHY (2.29 ANGSTROMS)</scope>
    <scope>FUNCTION</scope>
    <scope>CATALYTIC ACTIVITY</scope>
    <scope>BIOPHYSICOCHEMICAL PROPERTIES</scope>
    <scope>ACTIVITY REGULATION</scope>
    <source>
        <strain>ATCC BAA-611 / 2603 V/R</strain>
    </source>
</reference>
<protein>
    <recommendedName>
        <fullName evidence="3">Beta-glucuronidase</fullName>
        <shortName evidence="3">GUS</shortName>
        <ecNumber evidence="2">3.2.1.31</ecNumber>
    </recommendedName>
    <alternativeName>
        <fullName evidence="3">SaGUS</fullName>
    </alternativeName>
</protein>
<dbReference type="EC" id="3.2.1.31" evidence="2"/>
<dbReference type="EMBL" id="AE009948">
    <property type="protein sequence ID" value="AAM99585.1"/>
    <property type="molecule type" value="Genomic_DNA"/>
</dbReference>
<dbReference type="RefSeq" id="NP_687713.1">
    <property type="nucleotide sequence ID" value="NC_004116.1"/>
</dbReference>
<dbReference type="PDB" id="4JKK">
    <property type="method" value="X-ray"/>
    <property type="resolution" value="2.59 A"/>
    <property type="chains" value="A=1-599"/>
</dbReference>
<dbReference type="PDB" id="4JKL">
    <property type="method" value="X-ray"/>
    <property type="resolution" value="2.29 A"/>
    <property type="chains" value="A/B=1-599"/>
</dbReference>
<dbReference type="PDBsum" id="4JKK"/>
<dbReference type="PDBsum" id="4JKL"/>
<dbReference type="SMR" id="Q8E0N2"/>
<dbReference type="STRING" id="208435.SAG0698"/>
<dbReference type="KEGG" id="sag:SAG0698"/>
<dbReference type="PATRIC" id="fig|208435.3.peg.704"/>
<dbReference type="HOGENOM" id="CLU_006501_6_1_9"/>
<dbReference type="OrthoDB" id="9762066at2"/>
<dbReference type="EvolutionaryTrace" id="Q8E0N2"/>
<dbReference type="Proteomes" id="UP000000821">
    <property type="component" value="Chromosome"/>
</dbReference>
<dbReference type="GO" id="GO:0004565">
    <property type="term" value="F:beta-galactosidase activity"/>
    <property type="evidence" value="ECO:0007669"/>
    <property type="project" value="UniProtKB-EC"/>
</dbReference>
<dbReference type="GO" id="GO:0004566">
    <property type="term" value="F:beta-glucuronidase activity"/>
    <property type="evidence" value="ECO:0007669"/>
    <property type="project" value="TreeGrafter"/>
</dbReference>
<dbReference type="GO" id="GO:0030246">
    <property type="term" value="F:carbohydrate binding"/>
    <property type="evidence" value="ECO:0007669"/>
    <property type="project" value="TreeGrafter"/>
</dbReference>
<dbReference type="GO" id="GO:0005975">
    <property type="term" value="P:carbohydrate metabolic process"/>
    <property type="evidence" value="ECO:0007669"/>
    <property type="project" value="InterPro"/>
</dbReference>
<dbReference type="GO" id="GO:0019391">
    <property type="term" value="P:glucuronoside catabolic process"/>
    <property type="evidence" value="ECO:0007669"/>
    <property type="project" value="TreeGrafter"/>
</dbReference>
<dbReference type="FunFam" id="3.20.20.80:FF:000080">
    <property type="entry name" value="Beta-glucuronidase UidA"/>
    <property type="match status" value="1"/>
</dbReference>
<dbReference type="Gene3D" id="2.60.120.260">
    <property type="entry name" value="Galactose-binding domain-like"/>
    <property type="match status" value="1"/>
</dbReference>
<dbReference type="Gene3D" id="3.20.20.80">
    <property type="entry name" value="Glycosidases"/>
    <property type="match status" value="1"/>
</dbReference>
<dbReference type="Gene3D" id="2.60.40.10">
    <property type="entry name" value="Immunoglobulins"/>
    <property type="match status" value="1"/>
</dbReference>
<dbReference type="InterPro" id="IPR036156">
    <property type="entry name" value="Beta-gal/glucu_dom_sf"/>
</dbReference>
<dbReference type="InterPro" id="IPR008979">
    <property type="entry name" value="Galactose-bd-like_sf"/>
</dbReference>
<dbReference type="InterPro" id="IPR006101">
    <property type="entry name" value="Glyco_hydro_2"/>
</dbReference>
<dbReference type="InterPro" id="IPR023232">
    <property type="entry name" value="Glyco_hydro_2_AS"/>
</dbReference>
<dbReference type="InterPro" id="IPR006103">
    <property type="entry name" value="Glyco_hydro_2_cat"/>
</dbReference>
<dbReference type="InterPro" id="IPR023230">
    <property type="entry name" value="Glyco_hydro_2_CS"/>
</dbReference>
<dbReference type="InterPro" id="IPR006102">
    <property type="entry name" value="Glyco_hydro_2_Ig-like"/>
</dbReference>
<dbReference type="InterPro" id="IPR006104">
    <property type="entry name" value="Glyco_hydro_2_N"/>
</dbReference>
<dbReference type="InterPro" id="IPR017853">
    <property type="entry name" value="Glycoside_hydrolase_SF"/>
</dbReference>
<dbReference type="InterPro" id="IPR013783">
    <property type="entry name" value="Ig-like_fold"/>
</dbReference>
<dbReference type="NCBIfam" id="NF007538">
    <property type="entry name" value="PRK10150.1"/>
    <property type="match status" value="1"/>
</dbReference>
<dbReference type="PANTHER" id="PTHR10066">
    <property type="entry name" value="BETA-GLUCURONIDASE"/>
    <property type="match status" value="1"/>
</dbReference>
<dbReference type="PANTHER" id="PTHR10066:SF67">
    <property type="entry name" value="BETA-GLUCURONIDASE"/>
    <property type="match status" value="1"/>
</dbReference>
<dbReference type="Pfam" id="PF00703">
    <property type="entry name" value="Glyco_hydro_2"/>
    <property type="match status" value="1"/>
</dbReference>
<dbReference type="Pfam" id="PF02836">
    <property type="entry name" value="Glyco_hydro_2_C"/>
    <property type="match status" value="1"/>
</dbReference>
<dbReference type="Pfam" id="PF02837">
    <property type="entry name" value="Glyco_hydro_2_N"/>
    <property type="match status" value="1"/>
</dbReference>
<dbReference type="PRINTS" id="PR00132">
    <property type="entry name" value="GLHYDRLASE2"/>
</dbReference>
<dbReference type="SUPFAM" id="SSF51445">
    <property type="entry name" value="(Trans)glycosidases"/>
    <property type="match status" value="1"/>
</dbReference>
<dbReference type="SUPFAM" id="SSF49303">
    <property type="entry name" value="beta-Galactosidase/glucuronidase domain"/>
    <property type="match status" value="1"/>
</dbReference>
<dbReference type="SUPFAM" id="SSF49785">
    <property type="entry name" value="Galactose-binding domain-like"/>
    <property type="match status" value="1"/>
</dbReference>
<dbReference type="PROSITE" id="PS00719">
    <property type="entry name" value="GLYCOSYL_HYDROL_F2_1"/>
    <property type="match status" value="1"/>
</dbReference>
<dbReference type="PROSITE" id="PS00608">
    <property type="entry name" value="GLYCOSYL_HYDROL_F2_2"/>
    <property type="match status" value="1"/>
</dbReference>
<organism>
    <name type="scientific">Streptococcus agalactiae serotype V (strain ATCC BAA-611 / 2603 V/R)</name>
    <dbReference type="NCBI Taxonomy" id="208435"/>
    <lineage>
        <taxon>Bacteria</taxon>
        <taxon>Bacillati</taxon>
        <taxon>Bacillota</taxon>
        <taxon>Bacilli</taxon>
        <taxon>Lactobacillales</taxon>
        <taxon>Streptococcaceae</taxon>
        <taxon>Streptococcus</taxon>
    </lineage>
</organism>
<feature type="chain" id="PRO_0000458761" description="Beta-glucuronidase">
    <location>
        <begin position="1"/>
        <end position="599"/>
    </location>
</feature>
<feature type="short sequence motif" description="N-K motif" evidence="5">
    <location>
        <begin position="563"/>
        <end position="565"/>
    </location>
</feature>
<feature type="active site" description="Proton donor" evidence="1">
    <location>
        <position position="408"/>
    </location>
</feature>
<feature type="active site" description="Nucleophile" evidence="1">
    <location>
        <position position="501"/>
    </location>
</feature>
<feature type="binding site" evidence="1">
    <location>
        <position position="160"/>
    </location>
    <ligand>
        <name>D-glucuronate</name>
        <dbReference type="ChEBI" id="CHEBI:58720"/>
    </ligand>
</feature>
<feature type="binding site" evidence="1">
    <location>
        <position position="407"/>
    </location>
    <ligand>
        <name>D-glucuronate</name>
        <dbReference type="ChEBI" id="CHEBI:58720"/>
    </ligand>
</feature>
<feature type="binding site" evidence="1">
    <location>
        <position position="462"/>
    </location>
    <ligand>
        <name>D-glucuronate</name>
        <dbReference type="ChEBI" id="CHEBI:58720"/>
    </ligand>
</feature>
<feature type="binding site" evidence="1">
    <location>
        <position position="468"/>
    </location>
    <ligand>
        <name>D-glucuronate</name>
        <dbReference type="ChEBI" id="CHEBI:58720"/>
    </ligand>
</feature>
<feature type="binding site" evidence="1">
    <location>
        <position position="501"/>
    </location>
    <ligand>
        <name>D-glucuronate</name>
        <dbReference type="ChEBI" id="CHEBI:58720"/>
    </ligand>
</feature>
<feature type="binding site" evidence="1">
    <location>
        <position position="546"/>
    </location>
    <ligand>
        <name>D-glucuronate</name>
        <dbReference type="ChEBI" id="CHEBI:58720"/>
    </ligand>
</feature>
<feature type="binding site" evidence="1">
    <location>
        <position position="565"/>
    </location>
    <ligand>
        <name>D-glucuronate</name>
        <dbReference type="ChEBI" id="CHEBI:58720"/>
    </ligand>
</feature>
<feature type="strand" evidence="9">
    <location>
        <begin position="11"/>
        <end position="14"/>
    </location>
</feature>
<feature type="strand" evidence="9">
    <location>
        <begin position="17"/>
        <end position="24"/>
    </location>
</feature>
<feature type="strand" evidence="9">
    <location>
        <begin position="34"/>
        <end position="42"/>
    </location>
</feature>
<feature type="helix" evidence="9">
    <location>
        <begin position="45"/>
        <end position="47"/>
    </location>
</feature>
<feature type="helix" evidence="9">
    <location>
        <begin position="51"/>
        <end position="54"/>
    </location>
</feature>
<feature type="strand" evidence="9">
    <location>
        <begin position="58"/>
        <end position="67"/>
    </location>
</feature>
<feature type="strand" evidence="9">
    <location>
        <begin position="75"/>
        <end position="82"/>
    </location>
</feature>
<feature type="strand" evidence="9">
    <location>
        <begin position="85"/>
        <end position="92"/>
    </location>
</feature>
<feature type="strand" evidence="9">
    <location>
        <begin position="95"/>
        <end position="101"/>
    </location>
</feature>
<feature type="strand" evidence="9">
    <location>
        <begin position="107"/>
        <end position="110"/>
    </location>
</feature>
<feature type="helix" evidence="9">
    <location>
        <begin position="113"/>
        <end position="115"/>
    </location>
</feature>
<feature type="strand" evidence="9">
    <location>
        <begin position="118"/>
        <end position="128"/>
    </location>
</feature>
<feature type="strand" evidence="9">
    <location>
        <begin position="135"/>
        <end position="137"/>
    </location>
</feature>
<feature type="strand" evidence="9">
    <location>
        <begin position="139"/>
        <end position="145"/>
    </location>
</feature>
<feature type="strand" evidence="9">
    <location>
        <begin position="147"/>
        <end position="149"/>
    </location>
</feature>
<feature type="strand" evidence="9">
    <location>
        <begin position="151"/>
        <end position="161"/>
    </location>
</feature>
<feature type="strand" evidence="9">
    <location>
        <begin position="171"/>
        <end position="179"/>
    </location>
</feature>
<feature type="strand" evidence="9">
    <location>
        <begin position="181"/>
        <end position="190"/>
    </location>
</feature>
<feature type="strand" evidence="9">
    <location>
        <begin position="197"/>
        <end position="207"/>
    </location>
</feature>
<feature type="strand" evidence="9">
    <location>
        <begin position="210"/>
        <end position="217"/>
    </location>
</feature>
<feature type="strand" evidence="9">
    <location>
        <begin position="223"/>
        <end position="236"/>
    </location>
</feature>
<feature type="strand" evidence="9">
    <location>
        <begin position="248"/>
        <end position="256"/>
    </location>
</feature>
<feature type="strand" evidence="9">
    <location>
        <begin position="259"/>
        <end position="268"/>
    </location>
</feature>
<feature type="strand" evidence="9">
    <location>
        <begin position="273"/>
        <end position="276"/>
    </location>
</feature>
<feature type="strand" evidence="9">
    <location>
        <begin position="279"/>
        <end position="282"/>
    </location>
</feature>
<feature type="strand" evidence="9">
    <location>
        <begin position="285"/>
        <end position="287"/>
    </location>
</feature>
<feature type="strand" evidence="9">
    <location>
        <begin position="289"/>
        <end position="293"/>
    </location>
</feature>
<feature type="turn" evidence="9">
    <location>
        <begin position="299"/>
        <end position="301"/>
    </location>
</feature>
<feature type="helix" evidence="9">
    <location>
        <begin position="307"/>
        <end position="320"/>
    </location>
</feature>
<feature type="strand" evidence="9">
    <location>
        <begin position="324"/>
        <end position="326"/>
    </location>
</feature>
<feature type="helix" evidence="9">
    <location>
        <begin position="334"/>
        <end position="343"/>
    </location>
</feature>
<feature type="strand" evidence="9">
    <location>
        <begin position="346"/>
        <end position="350"/>
    </location>
</feature>
<feature type="helix" evidence="9">
    <location>
        <begin position="373"/>
        <end position="375"/>
    </location>
</feature>
<feature type="helix" evidence="9">
    <location>
        <begin position="380"/>
        <end position="394"/>
    </location>
</feature>
<feature type="strand" evidence="9">
    <location>
        <begin position="400"/>
        <end position="408"/>
    </location>
</feature>
<feature type="helix" evidence="9">
    <location>
        <begin position="416"/>
        <end position="430"/>
    </location>
</feature>
<feature type="strand" evidence="9">
    <location>
        <begin position="437"/>
        <end position="441"/>
    </location>
</feature>
<feature type="turn" evidence="9">
    <location>
        <begin position="447"/>
        <end position="449"/>
    </location>
</feature>
<feature type="strand" evidence="9">
    <location>
        <begin position="455"/>
        <end position="462"/>
    </location>
</feature>
<feature type="turn" evidence="9">
    <location>
        <begin position="465"/>
        <end position="467"/>
    </location>
</feature>
<feature type="strand" evidence="9">
    <location>
        <begin position="468"/>
        <end position="470"/>
    </location>
</feature>
<feature type="helix" evidence="9">
    <location>
        <begin position="474"/>
        <end position="491"/>
    </location>
</feature>
<feature type="strand" evidence="9">
    <location>
        <begin position="497"/>
        <end position="501"/>
    </location>
</feature>
<feature type="helix" evidence="9">
    <location>
        <begin position="520"/>
        <end position="534"/>
    </location>
</feature>
<feature type="strand" evidence="9">
    <location>
        <begin position="540"/>
        <end position="546"/>
    </location>
</feature>
<feature type="strand" evidence="9">
    <location>
        <begin position="560"/>
        <end position="563"/>
    </location>
</feature>
<feature type="helix" evidence="9">
    <location>
        <begin position="577"/>
        <end position="585"/>
    </location>
</feature>